<feature type="chain" id="PRO_0000163772" description="Ribonuclease Y">
    <location>
        <begin position="1"/>
        <end position="572"/>
    </location>
</feature>
<feature type="transmembrane region" description="Helical" evidence="1">
    <location>
        <begin position="1"/>
        <end position="21"/>
    </location>
</feature>
<feature type="domain" description="KH" evidence="1">
    <location>
        <begin position="262"/>
        <end position="322"/>
    </location>
</feature>
<feature type="domain" description="HD" evidence="2">
    <location>
        <begin position="388"/>
        <end position="481"/>
    </location>
</feature>
<feature type="region of interest" description="Disordered" evidence="3">
    <location>
        <begin position="59"/>
        <end position="85"/>
    </location>
</feature>
<feature type="region of interest" description="Disordered" evidence="3">
    <location>
        <begin position="110"/>
        <end position="142"/>
    </location>
</feature>
<feature type="compositionally biased region" description="Basic and acidic residues" evidence="3">
    <location>
        <begin position="110"/>
        <end position="119"/>
    </location>
</feature>
<feature type="compositionally biased region" description="Basic and acidic residues" evidence="3">
    <location>
        <begin position="129"/>
        <end position="142"/>
    </location>
</feature>
<evidence type="ECO:0000255" key="1">
    <source>
        <dbReference type="HAMAP-Rule" id="MF_00335"/>
    </source>
</evidence>
<evidence type="ECO:0000255" key="2">
    <source>
        <dbReference type="PROSITE-ProRule" id="PRU01175"/>
    </source>
</evidence>
<evidence type="ECO:0000256" key="3">
    <source>
        <dbReference type="SAM" id="MobiDB-lite"/>
    </source>
</evidence>
<proteinExistence type="inferred from homology"/>
<organism>
    <name type="scientific">Deinococcus radiodurans (strain ATCC 13939 / DSM 20539 / JCM 16871 / CCUG 27074 / LMG 4051 / NBRC 15346 / NCIMB 9279 / VKM B-1422 / R1)</name>
    <dbReference type="NCBI Taxonomy" id="243230"/>
    <lineage>
        <taxon>Bacteria</taxon>
        <taxon>Thermotogati</taxon>
        <taxon>Deinococcota</taxon>
        <taxon>Deinococci</taxon>
        <taxon>Deinococcales</taxon>
        <taxon>Deinococcaceae</taxon>
        <taxon>Deinococcus</taxon>
    </lineage>
</organism>
<accession>Q9RRM6</accession>
<sequence>MPTLYVILSLLLGLIGGVLVQRAIGSRQQAVTDDRLQREAQAEAQQIRAEAQRHARELHEAAEQDRQDAISKTQDAARRVQDAAERDTLAAAHEARLDEQREQVRALRAQLEAEREQAKADAAQQREALSTDRQETRREREDLGREIERLGRRTEQLDARSDKLDALEERLEGGWREVQRQEQEVAERLRQADLKLYEVAGLTPEVAREQILGRLNAELEEEKAIRVKAMTEKAGAEARRSARSIIAQAIQRSASETSAQLSVSVVPIPSDAMKGRLIGREGRNIRAFESLTGVDLIIDDTPEAVILSSFNPLRREVARHVLDALVADGRIHPTRIEEMVHKAQDDMKTFIHQQGEEAAIEAGVVGLKPGLVQLLGRMYFRTSYSQNVLKHSVQVAHLTGIMADELGLDAALARRAGLMHDVGKSIDREIEGTHVEIGINLARRFGEPAEVIDAIAHHHDPENGETLYSVLVAAADAISAARPGARREALESYVRRLEQLEQIAVAFPGVQQAYAIQAGREVRVIVQPEKVTDAQATLLARDIAGRVEQDMEYPGQVQVTVVRESRAVGVAR</sequence>
<protein>
    <recommendedName>
        <fullName evidence="1">Ribonuclease Y</fullName>
        <shortName evidence="1">RNase Y</shortName>
        <ecNumber evidence="1">3.1.-.-</ecNumber>
    </recommendedName>
</protein>
<keyword id="KW-1003">Cell membrane</keyword>
<keyword id="KW-0255">Endonuclease</keyword>
<keyword id="KW-0378">Hydrolase</keyword>
<keyword id="KW-0472">Membrane</keyword>
<keyword id="KW-0540">Nuclease</keyword>
<keyword id="KW-1185">Reference proteome</keyword>
<keyword id="KW-0694">RNA-binding</keyword>
<keyword id="KW-0812">Transmembrane</keyword>
<keyword id="KW-1133">Transmembrane helix</keyword>
<name>RNY_DEIRA</name>
<reference key="1">
    <citation type="journal article" date="1999" name="Science">
        <title>Genome sequence of the radioresistant bacterium Deinococcus radiodurans R1.</title>
        <authorList>
            <person name="White O."/>
            <person name="Eisen J.A."/>
            <person name="Heidelberg J.F."/>
            <person name="Hickey E.K."/>
            <person name="Peterson J.D."/>
            <person name="Dodson R.J."/>
            <person name="Haft D.H."/>
            <person name="Gwinn M.L."/>
            <person name="Nelson W.C."/>
            <person name="Richardson D.L."/>
            <person name="Moffat K.S."/>
            <person name="Qin H."/>
            <person name="Jiang L."/>
            <person name="Pamphile W."/>
            <person name="Crosby M."/>
            <person name="Shen M."/>
            <person name="Vamathevan J.J."/>
            <person name="Lam P."/>
            <person name="McDonald L.A."/>
            <person name="Utterback T.R."/>
            <person name="Zalewski C."/>
            <person name="Makarova K.S."/>
            <person name="Aravind L."/>
            <person name="Daly M.J."/>
            <person name="Minton K.W."/>
            <person name="Fleischmann R.D."/>
            <person name="Ketchum K.A."/>
            <person name="Nelson K.E."/>
            <person name="Salzberg S.L."/>
            <person name="Smith H.O."/>
            <person name="Venter J.C."/>
            <person name="Fraser C.M."/>
        </authorList>
    </citation>
    <scope>NUCLEOTIDE SEQUENCE [LARGE SCALE GENOMIC DNA]</scope>
    <source>
        <strain>ATCC 13939 / DSM 20539 / JCM 16871 / CCUG 27074 / LMG 4051 / NBRC 15346 / NCIMB 9279 / VKM B-1422 / R1</strain>
    </source>
</reference>
<comment type="function">
    <text evidence="1">Endoribonuclease that initiates mRNA decay.</text>
</comment>
<comment type="subcellular location">
    <subcellularLocation>
        <location evidence="1">Cell membrane</location>
        <topology evidence="1">Single-pass membrane protein</topology>
    </subcellularLocation>
</comment>
<comment type="similarity">
    <text evidence="1">Belongs to the RNase Y family.</text>
</comment>
<dbReference type="EC" id="3.1.-.-" evidence="1"/>
<dbReference type="EMBL" id="AE000513">
    <property type="protein sequence ID" value="AAF12001.1"/>
    <property type="molecule type" value="Genomic_DNA"/>
</dbReference>
<dbReference type="PIR" id="H75271">
    <property type="entry name" value="H75271"/>
</dbReference>
<dbReference type="RefSeq" id="NP_296182.1">
    <property type="nucleotide sequence ID" value="NC_001263.1"/>
</dbReference>
<dbReference type="RefSeq" id="WP_010889087.1">
    <property type="nucleotide sequence ID" value="NC_001263.1"/>
</dbReference>
<dbReference type="SMR" id="Q9RRM6"/>
<dbReference type="FunCoup" id="Q9RRM6">
    <property type="interactions" value="106"/>
</dbReference>
<dbReference type="STRING" id="243230.DR_2462"/>
<dbReference type="PaxDb" id="243230-DR_2462"/>
<dbReference type="EnsemblBacteria" id="AAF12001">
    <property type="protein sequence ID" value="AAF12001"/>
    <property type="gene ID" value="DR_2462"/>
</dbReference>
<dbReference type="KEGG" id="dra:DR_2462"/>
<dbReference type="PATRIC" id="fig|243230.17.peg.2698"/>
<dbReference type="eggNOG" id="COG1418">
    <property type="taxonomic scope" value="Bacteria"/>
</dbReference>
<dbReference type="eggNOG" id="COG2433">
    <property type="taxonomic scope" value="Bacteria"/>
</dbReference>
<dbReference type="HOGENOM" id="CLU_028328_1_0_0"/>
<dbReference type="InParanoid" id="Q9RRM6"/>
<dbReference type="OrthoDB" id="9803205at2"/>
<dbReference type="Proteomes" id="UP000002524">
    <property type="component" value="Chromosome 1"/>
</dbReference>
<dbReference type="GO" id="GO:0005886">
    <property type="term" value="C:plasma membrane"/>
    <property type="evidence" value="ECO:0007669"/>
    <property type="project" value="UniProtKB-SubCell"/>
</dbReference>
<dbReference type="GO" id="GO:0003723">
    <property type="term" value="F:RNA binding"/>
    <property type="evidence" value="ECO:0007669"/>
    <property type="project" value="UniProtKB-UniRule"/>
</dbReference>
<dbReference type="GO" id="GO:0004521">
    <property type="term" value="F:RNA endonuclease activity"/>
    <property type="evidence" value="ECO:0007669"/>
    <property type="project" value="UniProtKB-UniRule"/>
</dbReference>
<dbReference type="GO" id="GO:0006402">
    <property type="term" value="P:mRNA catabolic process"/>
    <property type="evidence" value="ECO:0007669"/>
    <property type="project" value="UniProtKB-UniRule"/>
</dbReference>
<dbReference type="CDD" id="cd00077">
    <property type="entry name" value="HDc"/>
    <property type="match status" value="1"/>
</dbReference>
<dbReference type="CDD" id="cd22431">
    <property type="entry name" value="KH-I_RNaseY"/>
    <property type="match status" value="1"/>
</dbReference>
<dbReference type="FunFam" id="1.10.3210.10:FF:000022">
    <property type="entry name" value="Ribonuclease Y"/>
    <property type="match status" value="1"/>
</dbReference>
<dbReference type="Gene3D" id="1.10.3210.10">
    <property type="entry name" value="Hypothetical protein af1432"/>
    <property type="match status" value="1"/>
</dbReference>
<dbReference type="HAMAP" id="MF_00335">
    <property type="entry name" value="RNase_Y"/>
    <property type="match status" value="1"/>
</dbReference>
<dbReference type="InterPro" id="IPR003607">
    <property type="entry name" value="HD/PDEase_dom"/>
</dbReference>
<dbReference type="InterPro" id="IPR006674">
    <property type="entry name" value="HD_domain"/>
</dbReference>
<dbReference type="InterPro" id="IPR006675">
    <property type="entry name" value="HDIG_dom"/>
</dbReference>
<dbReference type="InterPro" id="IPR004087">
    <property type="entry name" value="KH_dom"/>
</dbReference>
<dbReference type="InterPro" id="IPR004088">
    <property type="entry name" value="KH_dom_type_1"/>
</dbReference>
<dbReference type="InterPro" id="IPR036612">
    <property type="entry name" value="KH_dom_type_1_sf"/>
</dbReference>
<dbReference type="InterPro" id="IPR017705">
    <property type="entry name" value="Ribonuclease_Y"/>
</dbReference>
<dbReference type="InterPro" id="IPR022711">
    <property type="entry name" value="RNase_Y_N"/>
</dbReference>
<dbReference type="NCBIfam" id="TIGR00277">
    <property type="entry name" value="HDIG"/>
    <property type="match status" value="1"/>
</dbReference>
<dbReference type="NCBIfam" id="NF009344">
    <property type="entry name" value="PRK12705.1-1"/>
    <property type="match status" value="1"/>
</dbReference>
<dbReference type="NCBIfam" id="TIGR03319">
    <property type="entry name" value="RNase_Y"/>
    <property type="match status" value="1"/>
</dbReference>
<dbReference type="PANTHER" id="PTHR12826">
    <property type="entry name" value="RIBONUCLEASE Y"/>
    <property type="match status" value="1"/>
</dbReference>
<dbReference type="PANTHER" id="PTHR12826:SF15">
    <property type="entry name" value="RIBONUCLEASE Y"/>
    <property type="match status" value="1"/>
</dbReference>
<dbReference type="Pfam" id="PF01966">
    <property type="entry name" value="HD"/>
    <property type="match status" value="1"/>
</dbReference>
<dbReference type="Pfam" id="PF00013">
    <property type="entry name" value="KH_1"/>
    <property type="match status" value="1"/>
</dbReference>
<dbReference type="Pfam" id="PF12072">
    <property type="entry name" value="RNase_Y_N"/>
    <property type="match status" value="1"/>
</dbReference>
<dbReference type="SMART" id="SM00471">
    <property type="entry name" value="HDc"/>
    <property type="match status" value="1"/>
</dbReference>
<dbReference type="SMART" id="SM00322">
    <property type="entry name" value="KH"/>
    <property type="match status" value="1"/>
</dbReference>
<dbReference type="SUPFAM" id="SSF54791">
    <property type="entry name" value="Eukaryotic type KH-domain (KH-domain type I)"/>
    <property type="match status" value="1"/>
</dbReference>
<dbReference type="SUPFAM" id="SSF109604">
    <property type="entry name" value="HD-domain/PDEase-like"/>
    <property type="match status" value="1"/>
</dbReference>
<dbReference type="PROSITE" id="PS51831">
    <property type="entry name" value="HD"/>
    <property type="match status" value="1"/>
</dbReference>
<dbReference type="PROSITE" id="PS50084">
    <property type="entry name" value="KH_TYPE_1"/>
    <property type="match status" value="1"/>
</dbReference>
<gene>
    <name evidence="1" type="primary">rny</name>
    <name type="ordered locus">DR_2462</name>
</gene>